<accession>Q3Z4G4</accession>
<protein>
    <recommendedName>
        <fullName evidence="1">Lipoyl synthase</fullName>
        <ecNumber evidence="1">2.8.1.8</ecNumber>
    </recommendedName>
    <alternativeName>
        <fullName evidence="1">Lip-syn</fullName>
        <shortName evidence="1">LS</shortName>
    </alternativeName>
    <alternativeName>
        <fullName evidence="1">Lipoate synthase</fullName>
    </alternativeName>
    <alternativeName>
        <fullName evidence="1">Lipoic acid synthase</fullName>
    </alternativeName>
    <alternativeName>
        <fullName evidence="1">Sulfur insertion protein LipA</fullName>
    </alternativeName>
</protein>
<evidence type="ECO:0000255" key="1">
    <source>
        <dbReference type="HAMAP-Rule" id="MF_00206"/>
    </source>
</evidence>
<evidence type="ECO:0000255" key="2">
    <source>
        <dbReference type="PROSITE-ProRule" id="PRU01266"/>
    </source>
</evidence>
<gene>
    <name evidence="1" type="primary">lipA</name>
    <name type="ordered locus">SSON_0582</name>
</gene>
<dbReference type="EC" id="2.8.1.8" evidence="1"/>
<dbReference type="EMBL" id="CP000038">
    <property type="protein sequence ID" value="AAZ87348.1"/>
    <property type="molecule type" value="Genomic_DNA"/>
</dbReference>
<dbReference type="RefSeq" id="WP_000042632.1">
    <property type="nucleotide sequence ID" value="NC_007384.1"/>
</dbReference>
<dbReference type="SMR" id="Q3Z4G4"/>
<dbReference type="GeneID" id="93776854"/>
<dbReference type="KEGG" id="ssn:SSON_0582"/>
<dbReference type="HOGENOM" id="CLU_033144_2_1_6"/>
<dbReference type="UniPathway" id="UPA00538">
    <property type="reaction ID" value="UER00593"/>
</dbReference>
<dbReference type="Proteomes" id="UP000002529">
    <property type="component" value="Chromosome"/>
</dbReference>
<dbReference type="GO" id="GO:0005737">
    <property type="term" value="C:cytoplasm"/>
    <property type="evidence" value="ECO:0007669"/>
    <property type="project" value="UniProtKB-SubCell"/>
</dbReference>
<dbReference type="GO" id="GO:0051539">
    <property type="term" value="F:4 iron, 4 sulfur cluster binding"/>
    <property type="evidence" value="ECO:0007669"/>
    <property type="project" value="UniProtKB-UniRule"/>
</dbReference>
<dbReference type="GO" id="GO:0016992">
    <property type="term" value="F:lipoate synthase activity"/>
    <property type="evidence" value="ECO:0007669"/>
    <property type="project" value="UniProtKB-UniRule"/>
</dbReference>
<dbReference type="GO" id="GO:0046872">
    <property type="term" value="F:metal ion binding"/>
    <property type="evidence" value="ECO:0007669"/>
    <property type="project" value="UniProtKB-KW"/>
</dbReference>
<dbReference type="CDD" id="cd01335">
    <property type="entry name" value="Radical_SAM"/>
    <property type="match status" value="1"/>
</dbReference>
<dbReference type="FunFam" id="3.20.20.70:FF:000023">
    <property type="entry name" value="Lipoyl synthase"/>
    <property type="match status" value="1"/>
</dbReference>
<dbReference type="Gene3D" id="3.20.20.70">
    <property type="entry name" value="Aldolase class I"/>
    <property type="match status" value="1"/>
</dbReference>
<dbReference type="HAMAP" id="MF_00206">
    <property type="entry name" value="Lipoyl_synth"/>
    <property type="match status" value="1"/>
</dbReference>
<dbReference type="InterPro" id="IPR013785">
    <property type="entry name" value="Aldolase_TIM"/>
</dbReference>
<dbReference type="InterPro" id="IPR006638">
    <property type="entry name" value="Elp3/MiaA/NifB-like_rSAM"/>
</dbReference>
<dbReference type="InterPro" id="IPR031691">
    <property type="entry name" value="LIAS_N"/>
</dbReference>
<dbReference type="InterPro" id="IPR003698">
    <property type="entry name" value="Lipoyl_synth"/>
</dbReference>
<dbReference type="InterPro" id="IPR007197">
    <property type="entry name" value="rSAM"/>
</dbReference>
<dbReference type="NCBIfam" id="TIGR00510">
    <property type="entry name" value="lipA"/>
    <property type="match status" value="1"/>
</dbReference>
<dbReference type="NCBIfam" id="NF004019">
    <property type="entry name" value="PRK05481.1"/>
    <property type="match status" value="1"/>
</dbReference>
<dbReference type="NCBIfam" id="NF009544">
    <property type="entry name" value="PRK12928.1"/>
    <property type="match status" value="1"/>
</dbReference>
<dbReference type="PANTHER" id="PTHR10949">
    <property type="entry name" value="LIPOYL SYNTHASE"/>
    <property type="match status" value="1"/>
</dbReference>
<dbReference type="PANTHER" id="PTHR10949:SF0">
    <property type="entry name" value="LIPOYL SYNTHASE, MITOCHONDRIAL"/>
    <property type="match status" value="1"/>
</dbReference>
<dbReference type="Pfam" id="PF16881">
    <property type="entry name" value="LIAS_N"/>
    <property type="match status" value="1"/>
</dbReference>
<dbReference type="Pfam" id="PF04055">
    <property type="entry name" value="Radical_SAM"/>
    <property type="match status" value="1"/>
</dbReference>
<dbReference type="PIRSF" id="PIRSF005963">
    <property type="entry name" value="Lipoyl_synth"/>
    <property type="match status" value="1"/>
</dbReference>
<dbReference type="SFLD" id="SFLDF00271">
    <property type="entry name" value="lipoyl_synthase"/>
    <property type="match status" value="1"/>
</dbReference>
<dbReference type="SFLD" id="SFLDG01058">
    <property type="entry name" value="lipoyl_synthase_like"/>
    <property type="match status" value="1"/>
</dbReference>
<dbReference type="SMART" id="SM00729">
    <property type="entry name" value="Elp3"/>
    <property type="match status" value="1"/>
</dbReference>
<dbReference type="SUPFAM" id="SSF102114">
    <property type="entry name" value="Radical SAM enzymes"/>
    <property type="match status" value="1"/>
</dbReference>
<dbReference type="PROSITE" id="PS51918">
    <property type="entry name" value="RADICAL_SAM"/>
    <property type="match status" value="1"/>
</dbReference>
<organism>
    <name type="scientific">Shigella sonnei (strain Ss046)</name>
    <dbReference type="NCBI Taxonomy" id="300269"/>
    <lineage>
        <taxon>Bacteria</taxon>
        <taxon>Pseudomonadati</taxon>
        <taxon>Pseudomonadota</taxon>
        <taxon>Gammaproteobacteria</taxon>
        <taxon>Enterobacterales</taxon>
        <taxon>Enterobacteriaceae</taxon>
        <taxon>Shigella</taxon>
    </lineage>
</organism>
<comment type="function">
    <text evidence="1">Catalyzes the radical-mediated insertion of two sulfur atoms into the C-6 and C-8 positions of the octanoyl moiety bound to the lipoyl domains of lipoate-dependent enzymes, thereby converting the octanoylated domains into lipoylated derivatives.</text>
</comment>
<comment type="catalytic activity">
    <reaction evidence="1">
        <text>[[Fe-S] cluster scaffold protein carrying a second [4Fe-4S](2+) cluster] + N(6)-octanoyl-L-lysyl-[protein] + 2 oxidized [2Fe-2S]-[ferredoxin] + 2 S-adenosyl-L-methionine + 4 H(+) = [[Fe-S] cluster scaffold protein] + N(6)-[(R)-dihydrolipoyl]-L-lysyl-[protein] + 4 Fe(3+) + 2 hydrogen sulfide + 2 5'-deoxyadenosine + 2 L-methionine + 2 reduced [2Fe-2S]-[ferredoxin]</text>
        <dbReference type="Rhea" id="RHEA:16585"/>
        <dbReference type="Rhea" id="RHEA-COMP:9928"/>
        <dbReference type="Rhea" id="RHEA-COMP:10000"/>
        <dbReference type="Rhea" id="RHEA-COMP:10001"/>
        <dbReference type="Rhea" id="RHEA-COMP:10475"/>
        <dbReference type="Rhea" id="RHEA-COMP:14568"/>
        <dbReference type="Rhea" id="RHEA-COMP:14569"/>
        <dbReference type="ChEBI" id="CHEBI:15378"/>
        <dbReference type="ChEBI" id="CHEBI:17319"/>
        <dbReference type="ChEBI" id="CHEBI:29034"/>
        <dbReference type="ChEBI" id="CHEBI:29919"/>
        <dbReference type="ChEBI" id="CHEBI:33722"/>
        <dbReference type="ChEBI" id="CHEBI:33737"/>
        <dbReference type="ChEBI" id="CHEBI:33738"/>
        <dbReference type="ChEBI" id="CHEBI:57844"/>
        <dbReference type="ChEBI" id="CHEBI:59789"/>
        <dbReference type="ChEBI" id="CHEBI:78809"/>
        <dbReference type="ChEBI" id="CHEBI:83100"/>
        <dbReference type="EC" id="2.8.1.8"/>
    </reaction>
</comment>
<comment type="cofactor">
    <cofactor evidence="1">
        <name>[4Fe-4S] cluster</name>
        <dbReference type="ChEBI" id="CHEBI:49883"/>
    </cofactor>
    <text evidence="1">Binds 2 [4Fe-4S] clusters per subunit. One cluster is coordinated with 3 cysteines and an exchangeable S-adenosyl-L-methionine.</text>
</comment>
<comment type="pathway">
    <text evidence="1">Protein modification; protein lipoylation via endogenous pathway; protein N(6)-(lipoyl)lysine from octanoyl-[acyl-carrier-protein]: step 2/2.</text>
</comment>
<comment type="subcellular location">
    <subcellularLocation>
        <location evidence="1">Cytoplasm</location>
    </subcellularLocation>
</comment>
<comment type="similarity">
    <text evidence="1">Belongs to the radical SAM superfamily. Lipoyl synthase family.</text>
</comment>
<keyword id="KW-0004">4Fe-4S</keyword>
<keyword id="KW-0963">Cytoplasm</keyword>
<keyword id="KW-0408">Iron</keyword>
<keyword id="KW-0411">Iron-sulfur</keyword>
<keyword id="KW-0479">Metal-binding</keyword>
<keyword id="KW-1185">Reference proteome</keyword>
<keyword id="KW-0949">S-adenosyl-L-methionine</keyword>
<keyword id="KW-0808">Transferase</keyword>
<reference key="1">
    <citation type="journal article" date="2005" name="Nucleic Acids Res.">
        <title>Genome dynamics and diversity of Shigella species, the etiologic agents of bacillary dysentery.</title>
        <authorList>
            <person name="Yang F."/>
            <person name="Yang J."/>
            <person name="Zhang X."/>
            <person name="Chen L."/>
            <person name="Jiang Y."/>
            <person name="Yan Y."/>
            <person name="Tang X."/>
            <person name="Wang J."/>
            <person name="Xiong Z."/>
            <person name="Dong J."/>
            <person name="Xue Y."/>
            <person name="Zhu Y."/>
            <person name="Xu X."/>
            <person name="Sun L."/>
            <person name="Chen S."/>
            <person name="Nie H."/>
            <person name="Peng J."/>
            <person name="Xu J."/>
            <person name="Wang Y."/>
            <person name="Yuan Z."/>
            <person name="Wen Y."/>
            <person name="Yao Z."/>
            <person name="Shen Y."/>
            <person name="Qiang B."/>
            <person name="Hou Y."/>
            <person name="Yu J."/>
            <person name="Jin Q."/>
        </authorList>
    </citation>
    <scope>NUCLEOTIDE SEQUENCE [LARGE SCALE GENOMIC DNA]</scope>
    <source>
        <strain>Ss046</strain>
    </source>
</reference>
<proteinExistence type="inferred from homology"/>
<name>LIPA_SHISS</name>
<sequence>MSKPIVMERGVKYRDADKMALIPVKNVATEREALLRKPEWMKIKLPADSTRIQGIKAAMRKNGLHSVCEEASCPNLAECFNHGTATFMILGAICTRRCPFCDVAHGRPVAPDANEPVKLAQTIADMALRYVVITSVDRDDLRDGGAQHFADCITAIREKSPQIKIETLVPDFRGRMDRALDILTATPPDVFNHNLENVPRIYRQVRPGADYNWSLKLLERFKEAHPEIPTKSGLMVGLGETNEEIIEVMRDLRRHGVTMLTLGQYLQPSRHHLPVQRYVSPDEFDEMKAEALAMGFTHAACGPFVRSSYHADLQAKGMEVK</sequence>
<feature type="chain" id="PRO_1000012284" description="Lipoyl synthase">
    <location>
        <begin position="1"/>
        <end position="321"/>
    </location>
</feature>
<feature type="domain" description="Radical SAM core" evidence="2">
    <location>
        <begin position="80"/>
        <end position="297"/>
    </location>
</feature>
<feature type="binding site" evidence="1">
    <location>
        <position position="68"/>
    </location>
    <ligand>
        <name>[4Fe-4S] cluster</name>
        <dbReference type="ChEBI" id="CHEBI:49883"/>
        <label>1</label>
    </ligand>
</feature>
<feature type="binding site" evidence="1">
    <location>
        <position position="73"/>
    </location>
    <ligand>
        <name>[4Fe-4S] cluster</name>
        <dbReference type="ChEBI" id="CHEBI:49883"/>
        <label>1</label>
    </ligand>
</feature>
<feature type="binding site" evidence="1">
    <location>
        <position position="79"/>
    </location>
    <ligand>
        <name>[4Fe-4S] cluster</name>
        <dbReference type="ChEBI" id="CHEBI:49883"/>
        <label>1</label>
    </ligand>
</feature>
<feature type="binding site" evidence="1">
    <location>
        <position position="94"/>
    </location>
    <ligand>
        <name>[4Fe-4S] cluster</name>
        <dbReference type="ChEBI" id="CHEBI:49883"/>
        <label>2</label>
        <note>4Fe-4S-S-AdoMet</note>
    </ligand>
</feature>
<feature type="binding site" evidence="1">
    <location>
        <position position="98"/>
    </location>
    <ligand>
        <name>[4Fe-4S] cluster</name>
        <dbReference type="ChEBI" id="CHEBI:49883"/>
        <label>2</label>
        <note>4Fe-4S-S-AdoMet</note>
    </ligand>
</feature>
<feature type="binding site" evidence="1">
    <location>
        <position position="101"/>
    </location>
    <ligand>
        <name>[4Fe-4S] cluster</name>
        <dbReference type="ChEBI" id="CHEBI:49883"/>
        <label>2</label>
        <note>4Fe-4S-S-AdoMet</note>
    </ligand>
</feature>
<feature type="binding site" evidence="1">
    <location>
        <position position="308"/>
    </location>
    <ligand>
        <name>[4Fe-4S] cluster</name>
        <dbReference type="ChEBI" id="CHEBI:49883"/>
        <label>1</label>
    </ligand>
</feature>